<comment type="function">
    <text evidence="2 3">Voltage-sensitive calcium channels (VSCC) mediate the entry of calcium ions into excitable cells and are also involved in a variety of calcium-dependent processes, including muscle contraction, gene expression, cell motility, cell division and cell death. The isoform alpha-1S gives rise to L-type calcium currents. Long-lasting (L-type) calcium channels belong to the 'high-voltage activated' (HVA) group. They are blocked by dihydropyridines (DHP), phenylalkylamines, and by benzothiazepines. Calcium channels containing the alpha-1S subunit play an important role in excitation-contraction coupling in skele|tal muscle (By similarity).</text>
</comment>
<comment type="subunit">
    <text evidence="1">Multisubunit complex consisting of alpha-1, alpha-2, beta and delta subunits in a 1:1:1:1 ratio. The channel activity is directed by the pore-forming and voltage-sensitive alpha-1 subunit. In many cases, this subunit is sufficient to generate voltage-sensitive calcium channel activity. The auxiliary subunits beta and alpha-2/delta linked by a disulfide bridge regulate the channel activity. An additional gamma subunit is present only in skeletal muscle L-type channel (By similarity).</text>
</comment>
<comment type="subcellular location">
    <subcellularLocation>
        <location>Membrane</location>
        <topology>Multi-pass membrane protein</topology>
    </subcellularLocation>
</comment>
<comment type="tissue specificity">
    <text>Skeletal muscle specific.</text>
</comment>
<comment type="domain">
    <text>Each of the four internal repeats contains five hydrophobic transmembrane segments (S1, S2, S3, S5, S6) and one positively charged transmembrane segment (S4). S4 segments probably represent the voltage-sensor and are characterized by a series of positively charged amino acids at every third position.</text>
</comment>
<comment type="PTM">
    <text evidence="1">Phosphorylation by PKA stimulates the calcium channel function.</text>
</comment>
<comment type="similarity">
    <text evidence="6">Belongs to the calcium channel alpha-1 subunit (TC 1.A.1.11) family.</text>
</comment>
<protein>
    <recommendedName>
        <fullName>Voltage-dependent L-type calcium channel subunit alpha-1S</fullName>
    </recommendedName>
    <alternativeName>
        <fullName>FGalpha1S</fullName>
    </alternativeName>
    <alternativeName>
        <fullName>Voltage-gated calcium channel subunit alpha Cav1.1</fullName>
    </alternativeName>
</protein>
<dbReference type="EMBL" id="AF037625">
    <property type="protein sequence ID" value="AAC36126.1"/>
    <property type="molecule type" value="mRNA"/>
</dbReference>
<dbReference type="SMR" id="O57483"/>
<dbReference type="GO" id="GO:0030315">
    <property type="term" value="C:T-tubule"/>
    <property type="evidence" value="ECO:0000250"/>
    <property type="project" value="UniProtKB"/>
</dbReference>
<dbReference type="GO" id="GO:0005891">
    <property type="term" value="C:voltage-gated calcium channel complex"/>
    <property type="evidence" value="ECO:0007669"/>
    <property type="project" value="InterPro"/>
</dbReference>
<dbReference type="GO" id="GO:0008331">
    <property type="term" value="F:high voltage-gated calcium channel activity"/>
    <property type="evidence" value="ECO:0007669"/>
    <property type="project" value="TreeGrafter"/>
</dbReference>
<dbReference type="GO" id="GO:0046872">
    <property type="term" value="F:metal ion binding"/>
    <property type="evidence" value="ECO:0007669"/>
    <property type="project" value="UniProtKB-KW"/>
</dbReference>
<dbReference type="GO" id="GO:0005245">
    <property type="term" value="F:voltage-gated calcium channel activity"/>
    <property type="evidence" value="ECO:0000250"/>
    <property type="project" value="UniProtKB"/>
</dbReference>
<dbReference type="GO" id="GO:0098703">
    <property type="term" value="P:calcium ion import across plasma membrane"/>
    <property type="evidence" value="ECO:0007669"/>
    <property type="project" value="TreeGrafter"/>
</dbReference>
<dbReference type="GO" id="GO:0006936">
    <property type="term" value="P:muscle contraction"/>
    <property type="evidence" value="ECO:0000250"/>
    <property type="project" value="UniProtKB"/>
</dbReference>
<dbReference type="FunFam" id="1.10.287.70:FF:000007">
    <property type="entry name" value="Voltage-dependent L-type calcium channel subunit alpha"/>
    <property type="match status" value="1"/>
</dbReference>
<dbReference type="FunFam" id="1.10.287.70:FF:000009">
    <property type="entry name" value="Voltage-dependent L-type calcium channel subunit alpha"/>
    <property type="match status" value="1"/>
</dbReference>
<dbReference type="FunFam" id="1.10.287.70:FF:000021">
    <property type="entry name" value="Voltage-dependent L-type calcium channel subunit alpha"/>
    <property type="match status" value="1"/>
</dbReference>
<dbReference type="FunFam" id="1.20.120.350:FF:000001">
    <property type="entry name" value="Voltage-dependent L-type calcium channel subunit alpha"/>
    <property type="match status" value="1"/>
</dbReference>
<dbReference type="FunFam" id="1.20.120.350:FF:000006">
    <property type="entry name" value="Voltage-dependent L-type calcium channel subunit alpha"/>
    <property type="match status" value="1"/>
</dbReference>
<dbReference type="FunFam" id="1.20.120.350:FF:000010">
    <property type="entry name" value="Voltage-dependent L-type calcium channel subunit alpha"/>
    <property type="match status" value="1"/>
</dbReference>
<dbReference type="FunFam" id="1.20.120.350:FF:000020">
    <property type="entry name" value="Voltage-dependent L-type calcium channel subunit alpha"/>
    <property type="match status" value="1"/>
</dbReference>
<dbReference type="FunFam" id="1.10.238.10:FF:000063">
    <property type="entry name" value="Voltage-dependent N-type calcium channel subunit alpha"/>
    <property type="match status" value="1"/>
</dbReference>
<dbReference type="Gene3D" id="1.10.287.70">
    <property type="match status" value="4"/>
</dbReference>
<dbReference type="Gene3D" id="6.10.250.2180">
    <property type="match status" value="1"/>
</dbReference>
<dbReference type="Gene3D" id="6.10.250.2500">
    <property type="match status" value="1"/>
</dbReference>
<dbReference type="Gene3D" id="1.20.120.350">
    <property type="entry name" value="Voltage-gated potassium channels. Chain C"/>
    <property type="match status" value="4"/>
</dbReference>
<dbReference type="InterPro" id="IPR031649">
    <property type="entry name" value="GPHH_dom"/>
</dbReference>
<dbReference type="InterPro" id="IPR005821">
    <property type="entry name" value="Ion_trans_dom"/>
</dbReference>
<dbReference type="InterPro" id="IPR014873">
    <property type="entry name" value="VDCC_a1su_IQ"/>
</dbReference>
<dbReference type="InterPro" id="IPR050599">
    <property type="entry name" value="VDCC_alpha-1_subunit"/>
</dbReference>
<dbReference type="InterPro" id="IPR005450">
    <property type="entry name" value="VDCC_L_a1ssu"/>
</dbReference>
<dbReference type="InterPro" id="IPR005446">
    <property type="entry name" value="VDCC_L_a1su"/>
</dbReference>
<dbReference type="InterPro" id="IPR002077">
    <property type="entry name" value="VDCCAlpha1"/>
</dbReference>
<dbReference type="InterPro" id="IPR027359">
    <property type="entry name" value="Volt_channel_dom_sf"/>
</dbReference>
<dbReference type="PANTHER" id="PTHR45628">
    <property type="entry name" value="VOLTAGE-DEPENDENT CALCIUM CHANNEL TYPE A SUBUNIT ALPHA-1"/>
    <property type="match status" value="1"/>
</dbReference>
<dbReference type="PANTHER" id="PTHR45628:SF9">
    <property type="entry name" value="VOLTAGE-DEPENDENT L-TYPE CALCIUM CHANNEL SUBUNIT ALPHA-1S"/>
    <property type="match status" value="1"/>
</dbReference>
<dbReference type="Pfam" id="PF08763">
    <property type="entry name" value="Ca_chan_IQ"/>
    <property type="match status" value="1"/>
</dbReference>
<dbReference type="Pfam" id="PF16905">
    <property type="entry name" value="GPHH"/>
    <property type="match status" value="1"/>
</dbReference>
<dbReference type="Pfam" id="PF00520">
    <property type="entry name" value="Ion_trans"/>
    <property type="match status" value="4"/>
</dbReference>
<dbReference type="PRINTS" id="PR00167">
    <property type="entry name" value="CACHANNEL"/>
</dbReference>
<dbReference type="PRINTS" id="PR01630">
    <property type="entry name" value="LVDCCALPHA1"/>
</dbReference>
<dbReference type="PRINTS" id="PR01634">
    <property type="entry name" value="LVDCCALPHA1S"/>
</dbReference>
<dbReference type="SMART" id="SM01062">
    <property type="entry name" value="Ca_chan_IQ"/>
    <property type="match status" value="1"/>
</dbReference>
<dbReference type="SUPFAM" id="SSF81324">
    <property type="entry name" value="Voltage-gated potassium channels"/>
    <property type="match status" value="4"/>
</dbReference>
<evidence type="ECO:0000250" key="1"/>
<evidence type="ECO:0000250" key="2">
    <source>
        <dbReference type="UniProtKB" id="P07293"/>
    </source>
</evidence>
<evidence type="ECO:0000250" key="3">
    <source>
        <dbReference type="UniProtKB" id="Q13698"/>
    </source>
</evidence>
<evidence type="ECO:0000255" key="4"/>
<evidence type="ECO:0000256" key="5">
    <source>
        <dbReference type="SAM" id="MobiDB-lite"/>
    </source>
</evidence>
<evidence type="ECO:0000305" key="6"/>
<keyword id="KW-0106">Calcium</keyword>
<keyword id="KW-0107">Calcium channel</keyword>
<keyword id="KW-0109">Calcium transport</keyword>
<keyword id="KW-1015">Disulfide bond</keyword>
<keyword id="KW-0325">Glycoprotein</keyword>
<keyword id="KW-0407">Ion channel</keyword>
<keyword id="KW-0406">Ion transport</keyword>
<keyword id="KW-0472">Membrane</keyword>
<keyword id="KW-0479">Metal-binding</keyword>
<keyword id="KW-0597">Phosphoprotein</keyword>
<keyword id="KW-0677">Repeat</keyword>
<keyword id="KW-0812">Transmembrane</keyword>
<keyword id="KW-1133">Transmembrane helix</keyword>
<keyword id="KW-0813">Transport</keyword>
<keyword id="KW-0851">Voltage-gated channel</keyword>
<sequence length="1688" mass="192423">MDAMGSAAEEGTQKKKRRPLVPPPPRPPRALFCLGLQNPFRKFCINIVEWKPFEMIILLTIFANCVALAIFLPMPEDDTNSTNSVLEKVEYIFLFIFTIESFLKIVAYGFILHTDAYLRNGWNILDFTIVSVGVFSVLLEQISKLQGLPAPGKSSGFNVKALRAFRVLRPLRLVSGVPSLQVVLNSIIKAMIPLLHIALLVLFMIIIYAIVGLELFSGKMHKTCYFKDTDITATVDNEKPAPCSSTGQGRQCSINGSECRGWWPGPNNGITHFDNFGFAMLTVYQCITMEGWTEVLYWVNDAIGNEWPWIYFVSLILLGSFFVLNLVLGVLSGEFTKEREKAKSRGAFQMLREQQAMDEDLRGYLDWITHAEVMDPDMEPRDGFSQLEEGGSETDSLYEIEGINKFIAFFRQWRLWHRLLRRKSRDLVKSRFFYWLVIIIILLNTVIIATEHHHQPDSLTKAQDIANEVLLALFTMEMIVKIYALGFQSYFMSLFNRFDSFVVCTGLLEVMLVASDIMSPLGISVLRCIRLLRIFKITRYWTSLNNLVASLLNSVRSIASLLLLLFLFMIIFALLGMQMFGGKFDFEDLEVRRSTFDTFPQALITVFQILTGEDWTAVMYNGIMAYGGPTYSGMSVCIYFIILFVCGNYILLNVFLAIAVDNLAEAENLTSAQKAKAEERKRKKLARANPDKTEEEKLLLAKKEQKAKGEGIPTTARLKIDEFESNVNEIKDPYPSADFPGDDEEEEPEIPISPRPRPLAELQLKEKAVPMPEASSFFIFSPTNKIRVLCHRIINATTFTNFILLFILLSSISLAAEDPIQPESFRNKVLSKLDIVFTVIFTTEIVLKMTAYGAFLHKGSFCRNSFNILDLSVVGVSLISMGIESSAISVVKILRVLRVLRPLRAINRAKGLKHVVQCLFVAIKTIGNIVLVTTLLQFMFSCIGVQLFKGKFYSCTDTTKITADECRGYFFVAKDGNPAHMEAVPRVWSHSDFHFDNVLSGMMSLFTISTFEGWPQLLYRAIDSHAEDMGPIYNYRIEIAVFFIVYIILIAFFMMNIFVGFVIVTFQEQGEQEYKDCELDKNQRQCVQYALKARPLRRYIPKNPHQYKIWYVVTSSYFEYLMFFLITLNTISLGMQHYGQTAEFSYMSDILNVAFTGIFTVEMFLKLAAFKAKGYFGDPWNVFDFLIVIGSVIDVILSEIDTPGIPATPGAEESSRISITFFRLFRVLRLVKLLSRGEGVRTLLWTFIKSFQALPYVALLIVMLFFIYAVIGMQVFGKIALVDGTHINRNSNFQTFPQAVLLLFRCATGEAWQEILLACSYGKLCDPMSDFQPGEEYTCGTSFAYFYFISFYMLCAFLIINLFVAVIMDNFDYLTRDWSILGPHHLDEFKRIWAEYDPEAKGRIKHLDVVTLLRRIQPPLGFGKFCPHRVACKRLVSMNMPLNSDGTVTFNATLFSLVRTALKIKTEGNFEQSNEELRMIIKKIWKRTSMKLLDQVIPPIGDDEVTVGKFYAIFLIQEHFRKFKKRQEEYYGYRPKKNANNVEIQAGLRTIEEEEGEGELQRAISGDLTPEEELERAMVEAAIEEGIYRRTGGLFGQEDSFHTGPVSPLHTITSQRPLRFSEAGSEDLDSPVFLPEPVFFPPPRRNRNTNNSTISRGLDQRLTTPDFERVQQSEEQWDTNSSISQATN</sequence>
<name>CAC1S_AQUCT</name>
<reference key="1">
    <citation type="journal article" date="1998" name="J. Biol. Chem.">
        <title>Molecular cloning and functional expression of a skeletal muscle dihydropyridine receptor from Rana catesbeiana.</title>
        <authorList>
            <person name="Zhou J."/>
            <person name="Cribbs L."/>
            <person name="Yi J."/>
            <person name="Shirokov R."/>
            <person name="Perez-Reyes E."/>
            <person name="Rios E."/>
        </authorList>
    </citation>
    <scope>NUCLEOTIDE SEQUENCE [MRNA]</scope>
    <source>
        <tissue>Skeletal muscle</tissue>
    </source>
</reference>
<accession>O57483</accession>
<feature type="chain" id="PRO_0000053949" description="Voltage-dependent L-type calcium channel subunit alpha-1S">
    <location>
        <begin position="1"/>
        <end position="1688"/>
    </location>
</feature>
<feature type="topological domain" description="Cytoplasmic" evidence="4">
    <location>
        <begin position="1"/>
        <end position="51"/>
    </location>
</feature>
<feature type="transmembrane region" description="Helical; Name=S1 of repeat I">
    <location>
        <begin position="52"/>
        <end position="70"/>
    </location>
</feature>
<feature type="topological domain" description="Extracellular" evidence="4">
    <location>
        <begin position="71"/>
        <end position="88"/>
    </location>
</feature>
<feature type="transmembrane region" description="Helical; Name=S2 of repeat I">
    <location>
        <begin position="89"/>
        <end position="108"/>
    </location>
</feature>
<feature type="topological domain" description="Cytoplasmic" evidence="4">
    <location>
        <begin position="109"/>
        <end position="120"/>
    </location>
</feature>
<feature type="transmembrane region" description="Helical; Name=S3 of repeat I">
    <location>
        <begin position="121"/>
        <end position="139"/>
    </location>
</feature>
<feature type="topological domain" description="Extracellular" evidence="4">
    <location>
        <begin position="140"/>
        <end position="158"/>
    </location>
</feature>
<feature type="transmembrane region" description="Helical; Name=S4 of repeat I">
    <location>
        <begin position="159"/>
        <end position="177"/>
    </location>
</feature>
<feature type="topological domain" description="Cytoplasmic" evidence="4">
    <location>
        <begin position="178"/>
        <end position="196"/>
    </location>
</feature>
<feature type="transmembrane region" description="Helical; Name=S5 of repeat I">
    <location>
        <begin position="197"/>
        <end position="216"/>
    </location>
</feature>
<feature type="topological domain" description="Extracellular" evidence="4">
    <location>
        <begin position="217"/>
        <end position="307"/>
    </location>
</feature>
<feature type="transmembrane region" description="Helical; Name=S6 of repeat I">
    <location>
        <begin position="308"/>
        <end position="332"/>
    </location>
</feature>
<feature type="topological domain" description="Cytoplasmic" evidence="4">
    <location>
        <begin position="333"/>
        <end position="431"/>
    </location>
</feature>
<feature type="transmembrane region" description="Helical; Name=S1 of repeat II">
    <location>
        <begin position="432"/>
        <end position="450"/>
    </location>
</feature>
<feature type="topological domain" description="Extracellular" evidence="4">
    <location>
        <begin position="451"/>
        <end position="465"/>
    </location>
</feature>
<feature type="transmembrane region" description="Helical; Name=S2 of repeat II">
    <location>
        <begin position="466"/>
        <end position="485"/>
    </location>
</feature>
<feature type="topological domain" description="Cytoplasmic" evidence="4">
    <location>
        <begin position="486"/>
        <end position="493"/>
    </location>
</feature>
<feature type="transmembrane region" description="Helical; Name=S3 of repeat II">
    <location>
        <begin position="494"/>
        <end position="512"/>
    </location>
</feature>
<feature type="topological domain" description="Extracellular" evidence="4">
    <location>
        <begin position="513"/>
        <end position="522"/>
    </location>
</feature>
<feature type="transmembrane region" description="Helical; Name=S4 of repeat II">
    <location>
        <begin position="523"/>
        <end position="541"/>
    </location>
</feature>
<feature type="topological domain" description="Cytoplasmic" evidence="4">
    <location>
        <begin position="542"/>
        <end position="560"/>
    </location>
</feature>
<feature type="transmembrane region" description="Helical; Name=S5 of repeat II">
    <location>
        <begin position="561"/>
        <end position="580"/>
    </location>
</feature>
<feature type="topological domain" description="Extracellular" evidence="4">
    <location>
        <begin position="581"/>
        <end position="635"/>
    </location>
</feature>
<feature type="transmembrane region" description="Helical; Name=S6 of repeat II">
    <location>
        <begin position="636"/>
        <end position="660"/>
    </location>
</feature>
<feature type="topological domain" description="Cytoplasmic" evidence="4">
    <location>
        <begin position="661"/>
        <end position="797"/>
    </location>
</feature>
<feature type="transmembrane region" description="Helical; Name=S1 of repeat III">
    <location>
        <begin position="798"/>
        <end position="816"/>
    </location>
</feature>
<feature type="topological domain" description="Extracellular" evidence="4">
    <location>
        <begin position="817"/>
        <end position="832"/>
    </location>
</feature>
<feature type="transmembrane region" description="Helical; Name=S2 of repeat III">
    <location>
        <begin position="833"/>
        <end position="852"/>
    </location>
</feature>
<feature type="topological domain" description="Cytoplasmic" evidence="4">
    <location>
        <begin position="853"/>
        <end position="864"/>
    </location>
</feature>
<feature type="transmembrane region" description="Helical; Name=S3 of repeat III">
    <location>
        <begin position="865"/>
        <end position="883"/>
    </location>
</feature>
<feature type="topological domain" description="Extracellular" evidence="4">
    <location>
        <begin position="884"/>
        <end position="890"/>
    </location>
</feature>
<feature type="transmembrane region" description="Helical; Name=S4 of repeat III">
    <location>
        <begin position="891"/>
        <end position="909"/>
    </location>
</feature>
<feature type="topological domain" description="Cytoplasmic" evidence="4">
    <location>
        <begin position="910"/>
        <end position="928"/>
    </location>
</feature>
<feature type="transmembrane region" description="Helical; Name=S5 of repeat III">
    <location>
        <begin position="929"/>
        <end position="948"/>
    </location>
</feature>
<feature type="topological domain" description="Extracellular" evidence="4">
    <location>
        <begin position="949"/>
        <end position="1038"/>
    </location>
</feature>
<feature type="transmembrane region" description="Helical; Name=S6 of repeat III">
    <location>
        <begin position="1039"/>
        <end position="1063"/>
    </location>
</feature>
<feature type="topological domain" description="Cytoplasmic" evidence="4">
    <location>
        <begin position="1064"/>
        <end position="1116"/>
    </location>
</feature>
<feature type="transmembrane region" description="Helical; Name=S1 of repeat IV">
    <location>
        <begin position="1117"/>
        <end position="1135"/>
    </location>
</feature>
<feature type="topological domain" description="Extracellular" evidence="4">
    <location>
        <begin position="1136"/>
        <end position="1150"/>
    </location>
</feature>
<feature type="transmembrane region" description="Helical; Name=S2 of repeat IV">
    <location>
        <begin position="1151"/>
        <end position="1170"/>
    </location>
</feature>
<feature type="topological domain" description="Cytoplasmic" evidence="4">
    <location>
        <begin position="1171"/>
        <end position="1178"/>
    </location>
</feature>
<feature type="transmembrane region" description="Helical; Name=S3 of repeat IV">
    <location>
        <begin position="1179"/>
        <end position="1197"/>
    </location>
</feature>
<feature type="topological domain" description="Extracellular" evidence="4">
    <location>
        <begin position="1198"/>
        <end position="1218"/>
    </location>
</feature>
<feature type="transmembrane region" description="Helical; Name=S4 of repeat IV">
    <location>
        <begin position="1219"/>
        <end position="1237"/>
    </location>
</feature>
<feature type="topological domain" description="Cytoplasmic" evidence="4">
    <location>
        <begin position="1238"/>
        <end position="1256"/>
    </location>
</feature>
<feature type="transmembrane region" description="Helical; Name=S5 of repeat IV">
    <location>
        <begin position="1257"/>
        <end position="1276"/>
    </location>
</feature>
<feature type="topological domain" description="Extracellular" evidence="4">
    <location>
        <begin position="1277"/>
        <end position="1343"/>
    </location>
</feature>
<feature type="transmembrane region" description="Helical; Name=S6 of repeat IV">
    <location>
        <begin position="1344"/>
        <end position="1368"/>
    </location>
</feature>
<feature type="topological domain" description="Cytoplasmic" evidence="4">
    <location>
        <begin position="1369"/>
        <end position="1688"/>
    </location>
</feature>
<feature type="repeat" description="I">
    <location>
        <begin position="38"/>
        <end position="335"/>
    </location>
</feature>
<feature type="repeat" description="II">
    <location>
        <begin position="417"/>
        <end position="663"/>
    </location>
</feature>
<feature type="repeat" description="III">
    <location>
        <begin position="784"/>
        <end position="1066"/>
    </location>
</feature>
<feature type="repeat" description="IV">
    <location>
        <begin position="1103"/>
        <end position="1371"/>
    </location>
</feature>
<feature type="region of interest" description="Disordered" evidence="5">
    <location>
        <begin position="1"/>
        <end position="24"/>
    </location>
</feature>
<feature type="region of interest" description="Binding to the beta subunit" evidence="1">
    <location>
        <begin position="355"/>
        <end position="372"/>
    </location>
</feature>
<feature type="region of interest" description="Disordered" evidence="5">
    <location>
        <begin position="672"/>
        <end position="696"/>
    </location>
</feature>
<feature type="region of interest" description="Disordered" evidence="5">
    <location>
        <begin position="729"/>
        <end position="755"/>
    </location>
</feature>
<feature type="region of interest" description="Dihydropyridine binding" evidence="1">
    <location>
        <begin position="986"/>
        <end position="1075"/>
    </location>
</feature>
<feature type="region of interest" description="Dihydropyridine binding" evidence="1">
    <location>
        <begin position="1324"/>
        <end position="1390"/>
    </location>
</feature>
<feature type="region of interest" description="Phenylalkylamine binding" evidence="1">
    <location>
        <begin position="1336"/>
        <end position="1379"/>
    </location>
</feature>
<feature type="region of interest" description="Disordered" evidence="5">
    <location>
        <begin position="1635"/>
        <end position="1664"/>
    </location>
</feature>
<feature type="region of interest" description="Disordered" evidence="5">
    <location>
        <begin position="1669"/>
        <end position="1688"/>
    </location>
</feature>
<feature type="compositionally biased region" description="Acidic residues" evidence="5">
    <location>
        <begin position="740"/>
        <end position="749"/>
    </location>
</feature>
<feature type="compositionally biased region" description="Polar residues" evidence="5">
    <location>
        <begin position="1678"/>
        <end position="1688"/>
    </location>
</feature>
<feature type="binding site" evidence="2">
    <location>
        <position position="290"/>
    </location>
    <ligand>
        <name>Ca(2+)</name>
        <dbReference type="ChEBI" id="CHEBI:29108"/>
    </ligand>
</feature>
<feature type="binding site" evidence="2">
    <location>
        <position position="613"/>
    </location>
    <ligand>
        <name>Ca(2+)</name>
        <dbReference type="ChEBI" id="CHEBI:29108"/>
    </ligand>
</feature>
<feature type="binding site" evidence="2">
    <location>
        <position position="1012"/>
    </location>
    <ligand>
        <name>Ca(2+)</name>
        <dbReference type="ChEBI" id="CHEBI:29108"/>
    </ligand>
</feature>
<feature type="glycosylation site" description="N-linked (GlcNAc...) asparagine" evidence="4">
    <location>
        <position position="80"/>
    </location>
</feature>
<feature type="glycosylation site" description="N-linked (GlcNAc...) asparagine" evidence="4">
    <location>
        <position position="255"/>
    </location>
</feature>
<organism>
    <name type="scientific">Aquarana catesbeiana</name>
    <name type="common">American bullfrog</name>
    <name type="synonym">Rana catesbeiana</name>
    <dbReference type="NCBI Taxonomy" id="8400"/>
    <lineage>
        <taxon>Eukaryota</taxon>
        <taxon>Metazoa</taxon>
        <taxon>Chordata</taxon>
        <taxon>Craniata</taxon>
        <taxon>Vertebrata</taxon>
        <taxon>Euteleostomi</taxon>
        <taxon>Amphibia</taxon>
        <taxon>Batrachia</taxon>
        <taxon>Anura</taxon>
        <taxon>Neobatrachia</taxon>
        <taxon>Ranoidea</taxon>
        <taxon>Ranidae</taxon>
        <taxon>Aquarana</taxon>
    </lineage>
</organism>
<proteinExistence type="evidence at transcript level"/>